<sequence>MNILNNNLYGMDKEIYEIIKNEKLRQNNVIELIASENFVSSAVLEAQGSILTNKYAEGYPSKRFYNGCDEVDKAEVLAIERAKKLFNCKYANVQPHSGSQANQAVYLALLQPCDTILGMSLDSGGHLTHGAAPNISGKWFNTVAYNVDKETYLIDYDEIKRLAVLHNPKLLIAGFSAYPRKIDFARFREIADKVGAYLMADIAHIAGLVATGEHQSPIPYAHVVTSTTHKTLRGPRGGLILSDYEEIGKKINSALFPGLQGGPLMHVIAAKAVAFLENLQPEYKCYIKQVISNAKALAISLQERGYDILTGGTDNHIVLVDLRKDGITGKCAANSLDRAGITCNKNAIPFDTTSPFVTSGIRFGTSACTTKGFKEKDFVLIGHMVAEILDGLKNNEDNSKTEQKVLSEVKKLIKLFPFYD</sequence>
<organism>
    <name type="scientific">Rickettsia typhi (strain ATCC VR-144 / Wilmington)</name>
    <dbReference type="NCBI Taxonomy" id="257363"/>
    <lineage>
        <taxon>Bacteria</taxon>
        <taxon>Pseudomonadati</taxon>
        <taxon>Pseudomonadota</taxon>
        <taxon>Alphaproteobacteria</taxon>
        <taxon>Rickettsiales</taxon>
        <taxon>Rickettsiaceae</taxon>
        <taxon>Rickettsieae</taxon>
        <taxon>Rickettsia</taxon>
        <taxon>typhus group</taxon>
    </lineage>
</organism>
<gene>
    <name evidence="1" type="primary">glyA</name>
    <name type="ordered locus">RT0728</name>
</gene>
<name>GLYA_RICTY</name>
<keyword id="KW-0028">Amino-acid biosynthesis</keyword>
<keyword id="KW-0963">Cytoplasm</keyword>
<keyword id="KW-0554">One-carbon metabolism</keyword>
<keyword id="KW-0663">Pyridoxal phosphate</keyword>
<keyword id="KW-0808">Transferase</keyword>
<feature type="chain" id="PRO_0000113655" description="Serine hydroxymethyltransferase">
    <location>
        <begin position="1"/>
        <end position="420"/>
    </location>
</feature>
<feature type="binding site" evidence="1">
    <location>
        <position position="121"/>
    </location>
    <ligand>
        <name>(6S)-5,6,7,8-tetrahydrofolate</name>
        <dbReference type="ChEBI" id="CHEBI:57453"/>
    </ligand>
</feature>
<feature type="binding site" evidence="1">
    <location>
        <begin position="125"/>
        <end position="127"/>
    </location>
    <ligand>
        <name>(6S)-5,6,7,8-tetrahydrofolate</name>
        <dbReference type="ChEBI" id="CHEBI:57453"/>
    </ligand>
</feature>
<feature type="binding site" evidence="1">
    <location>
        <position position="246"/>
    </location>
    <ligand>
        <name>(6S)-5,6,7,8-tetrahydrofolate</name>
        <dbReference type="ChEBI" id="CHEBI:57453"/>
    </ligand>
</feature>
<feature type="binding site" evidence="1">
    <location>
        <begin position="354"/>
        <end position="356"/>
    </location>
    <ligand>
        <name>(6S)-5,6,7,8-tetrahydrofolate</name>
        <dbReference type="ChEBI" id="CHEBI:57453"/>
    </ligand>
</feature>
<feature type="site" description="Plays an important role in substrate specificity" evidence="1">
    <location>
        <position position="229"/>
    </location>
</feature>
<feature type="modified residue" description="N6-(pyridoxal phosphate)lysine" evidence="1">
    <location>
        <position position="230"/>
    </location>
</feature>
<dbReference type="EC" id="2.1.2.1" evidence="1"/>
<dbReference type="EMBL" id="AE017197">
    <property type="protein sequence ID" value="AAU04185.1"/>
    <property type="molecule type" value="Genomic_DNA"/>
</dbReference>
<dbReference type="RefSeq" id="WP_011191161.1">
    <property type="nucleotide sequence ID" value="NC_006142.1"/>
</dbReference>
<dbReference type="SMR" id="Q68W07"/>
<dbReference type="KEGG" id="rty:RT0728"/>
<dbReference type="eggNOG" id="COG0112">
    <property type="taxonomic scope" value="Bacteria"/>
</dbReference>
<dbReference type="HOGENOM" id="CLU_022477_2_1_5"/>
<dbReference type="OrthoDB" id="9803846at2"/>
<dbReference type="UniPathway" id="UPA00193"/>
<dbReference type="UniPathway" id="UPA00288">
    <property type="reaction ID" value="UER01023"/>
</dbReference>
<dbReference type="Proteomes" id="UP000000604">
    <property type="component" value="Chromosome"/>
</dbReference>
<dbReference type="GO" id="GO:0005829">
    <property type="term" value="C:cytosol"/>
    <property type="evidence" value="ECO:0007669"/>
    <property type="project" value="TreeGrafter"/>
</dbReference>
<dbReference type="GO" id="GO:0004372">
    <property type="term" value="F:glycine hydroxymethyltransferase activity"/>
    <property type="evidence" value="ECO:0007669"/>
    <property type="project" value="UniProtKB-UniRule"/>
</dbReference>
<dbReference type="GO" id="GO:0030170">
    <property type="term" value="F:pyridoxal phosphate binding"/>
    <property type="evidence" value="ECO:0007669"/>
    <property type="project" value="UniProtKB-UniRule"/>
</dbReference>
<dbReference type="GO" id="GO:0019264">
    <property type="term" value="P:glycine biosynthetic process from serine"/>
    <property type="evidence" value="ECO:0007669"/>
    <property type="project" value="UniProtKB-UniRule"/>
</dbReference>
<dbReference type="GO" id="GO:0035999">
    <property type="term" value="P:tetrahydrofolate interconversion"/>
    <property type="evidence" value="ECO:0007669"/>
    <property type="project" value="UniProtKB-UniRule"/>
</dbReference>
<dbReference type="CDD" id="cd00378">
    <property type="entry name" value="SHMT"/>
    <property type="match status" value="1"/>
</dbReference>
<dbReference type="FunFam" id="3.40.640.10:FF:000001">
    <property type="entry name" value="Serine hydroxymethyltransferase"/>
    <property type="match status" value="1"/>
</dbReference>
<dbReference type="Gene3D" id="3.90.1150.10">
    <property type="entry name" value="Aspartate Aminotransferase, domain 1"/>
    <property type="match status" value="1"/>
</dbReference>
<dbReference type="Gene3D" id="3.40.640.10">
    <property type="entry name" value="Type I PLP-dependent aspartate aminotransferase-like (Major domain)"/>
    <property type="match status" value="1"/>
</dbReference>
<dbReference type="HAMAP" id="MF_00051">
    <property type="entry name" value="SHMT"/>
    <property type="match status" value="1"/>
</dbReference>
<dbReference type="InterPro" id="IPR015424">
    <property type="entry name" value="PyrdxlP-dep_Trfase"/>
</dbReference>
<dbReference type="InterPro" id="IPR015421">
    <property type="entry name" value="PyrdxlP-dep_Trfase_major"/>
</dbReference>
<dbReference type="InterPro" id="IPR015422">
    <property type="entry name" value="PyrdxlP-dep_Trfase_small"/>
</dbReference>
<dbReference type="InterPro" id="IPR001085">
    <property type="entry name" value="Ser_HO-MeTrfase"/>
</dbReference>
<dbReference type="InterPro" id="IPR049943">
    <property type="entry name" value="Ser_HO-MeTrfase-like"/>
</dbReference>
<dbReference type="InterPro" id="IPR019798">
    <property type="entry name" value="Ser_HO-MeTrfase_PLP_BS"/>
</dbReference>
<dbReference type="InterPro" id="IPR039429">
    <property type="entry name" value="SHMT-like_dom"/>
</dbReference>
<dbReference type="NCBIfam" id="NF000586">
    <property type="entry name" value="PRK00011.1"/>
    <property type="match status" value="1"/>
</dbReference>
<dbReference type="PANTHER" id="PTHR11680">
    <property type="entry name" value="SERINE HYDROXYMETHYLTRANSFERASE"/>
    <property type="match status" value="1"/>
</dbReference>
<dbReference type="PANTHER" id="PTHR11680:SF35">
    <property type="entry name" value="SERINE HYDROXYMETHYLTRANSFERASE 1"/>
    <property type="match status" value="1"/>
</dbReference>
<dbReference type="Pfam" id="PF00464">
    <property type="entry name" value="SHMT"/>
    <property type="match status" value="1"/>
</dbReference>
<dbReference type="PIRSF" id="PIRSF000412">
    <property type="entry name" value="SHMT"/>
    <property type="match status" value="1"/>
</dbReference>
<dbReference type="SUPFAM" id="SSF53383">
    <property type="entry name" value="PLP-dependent transferases"/>
    <property type="match status" value="1"/>
</dbReference>
<dbReference type="PROSITE" id="PS00096">
    <property type="entry name" value="SHMT"/>
    <property type="match status" value="1"/>
</dbReference>
<reference key="1">
    <citation type="journal article" date="2004" name="J. Bacteriol.">
        <title>Complete genome sequence of Rickettsia typhi and comparison with sequences of other Rickettsiae.</title>
        <authorList>
            <person name="McLeod M.P."/>
            <person name="Qin X."/>
            <person name="Karpathy S.E."/>
            <person name="Gioia J."/>
            <person name="Highlander S.K."/>
            <person name="Fox G.E."/>
            <person name="McNeill T.Z."/>
            <person name="Jiang H."/>
            <person name="Muzny D."/>
            <person name="Jacob L.S."/>
            <person name="Hawes A.C."/>
            <person name="Sodergren E."/>
            <person name="Gill R."/>
            <person name="Hume J."/>
            <person name="Morgan M."/>
            <person name="Fan G."/>
            <person name="Amin A.G."/>
            <person name="Gibbs R.A."/>
            <person name="Hong C."/>
            <person name="Yu X.-J."/>
            <person name="Walker D.H."/>
            <person name="Weinstock G.M."/>
        </authorList>
    </citation>
    <scope>NUCLEOTIDE SEQUENCE [LARGE SCALE GENOMIC DNA]</scope>
    <source>
        <strain>ATCC VR-144 / Wilmington</strain>
    </source>
</reference>
<accession>Q68W07</accession>
<proteinExistence type="inferred from homology"/>
<comment type="function">
    <text evidence="1">Catalyzes the reversible interconversion of serine and glycine with tetrahydrofolate (THF) serving as the one-carbon carrier. This reaction serves as the major source of one-carbon groups required for the biosynthesis of purines, thymidylate, methionine, and other important biomolecules. Also exhibits THF-independent aldolase activity toward beta-hydroxyamino acids, producing glycine and aldehydes, via a retro-aldol mechanism.</text>
</comment>
<comment type="catalytic activity">
    <reaction evidence="1">
        <text>(6R)-5,10-methylene-5,6,7,8-tetrahydrofolate + glycine + H2O = (6S)-5,6,7,8-tetrahydrofolate + L-serine</text>
        <dbReference type="Rhea" id="RHEA:15481"/>
        <dbReference type="ChEBI" id="CHEBI:15377"/>
        <dbReference type="ChEBI" id="CHEBI:15636"/>
        <dbReference type="ChEBI" id="CHEBI:33384"/>
        <dbReference type="ChEBI" id="CHEBI:57305"/>
        <dbReference type="ChEBI" id="CHEBI:57453"/>
        <dbReference type="EC" id="2.1.2.1"/>
    </reaction>
</comment>
<comment type="cofactor">
    <cofactor evidence="1">
        <name>pyridoxal 5'-phosphate</name>
        <dbReference type="ChEBI" id="CHEBI:597326"/>
    </cofactor>
</comment>
<comment type="pathway">
    <text evidence="1">One-carbon metabolism; tetrahydrofolate interconversion.</text>
</comment>
<comment type="pathway">
    <text evidence="1">Amino-acid biosynthesis; glycine biosynthesis; glycine from L-serine: step 1/1.</text>
</comment>
<comment type="subunit">
    <text evidence="1">Homodimer.</text>
</comment>
<comment type="subcellular location">
    <subcellularLocation>
        <location evidence="1">Cytoplasm</location>
    </subcellularLocation>
</comment>
<comment type="similarity">
    <text evidence="1">Belongs to the SHMT family.</text>
</comment>
<protein>
    <recommendedName>
        <fullName evidence="1">Serine hydroxymethyltransferase</fullName>
        <shortName evidence="1">SHMT</shortName>
        <shortName evidence="1">Serine methylase</shortName>
        <ecNumber evidence="1">2.1.2.1</ecNumber>
    </recommendedName>
</protein>
<evidence type="ECO:0000255" key="1">
    <source>
        <dbReference type="HAMAP-Rule" id="MF_00051"/>
    </source>
</evidence>